<accession>F6UH96</accession>
<accession>A9JTW7</accession>
<reference key="1">
    <citation type="journal article" date="2010" name="Science">
        <title>The genome of the Western clawed frog Xenopus tropicalis.</title>
        <authorList>
            <person name="Hellsten U."/>
            <person name="Harland R.M."/>
            <person name="Gilchrist M.J."/>
            <person name="Hendrix D."/>
            <person name="Jurka J."/>
            <person name="Kapitonov V."/>
            <person name="Ovcharenko I."/>
            <person name="Putnam N.H."/>
            <person name="Shu S."/>
            <person name="Taher L."/>
            <person name="Blitz I.L."/>
            <person name="Blumberg B."/>
            <person name="Dichmann D.S."/>
            <person name="Dubchak I."/>
            <person name="Amaya E."/>
            <person name="Detter J.C."/>
            <person name="Fletcher R."/>
            <person name="Gerhard D.S."/>
            <person name="Goodstein D."/>
            <person name="Graves T."/>
            <person name="Grigoriev I.V."/>
            <person name="Grimwood J."/>
            <person name="Kawashima T."/>
            <person name="Lindquist E."/>
            <person name="Lucas S.M."/>
            <person name="Mead P.E."/>
            <person name="Mitros T."/>
            <person name="Ogino H."/>
            <person name="Ohta Y."/>
            <person name="Poliakov A.V."/>
            <person name="Pollet N."/>
            <person name="Robert J."/>
            <person name="Salamov A."/>
            <person name="Sater A.K."/>
            <person name="Schmutz J."/>
            <person name="Terry A."/>
            <person name="Vize P.D."/>
            <person name="Warren W.C."/>
            <person name="Wells D."/>
            <person name="Wills A."/>
            <person name="Wilson R.K."/>
            <person name="Zimmerman L.B."/>
            <person name="Zorn A.M."/>
            <person name="Grainger R."/>
            <person name="Grammer T."/>
            <person name="Khokha M.K."/>
            <person name="Richardson P.M."/>
            <person name="Rokhsar D.S."/>
        </authorList>
    </citation>
    <scope>NUCLEOTIDE SEQUENCE [LARGE SCALE GENOMIC DNA]</scope>
</reference>
<reference key="2">
    <citation type="submission" date="2007-11" db="EMBL/GenBank/DDBJ databases">
        <authorList>
            <consortium name="NIH - Xenopus Gene Collection (XGC) project"/>
        </authorList>
    </citation>
    <scope>NUCLEOTIDE SEQUENCE [LARGE SCALE MRNA]</scope>
    <source>
        <strain>N6</strain>
        <tissue>Ovary</tissue>
    </source>
</reference>
<dbReference type="EC" id="3.4.24.-" evidence="2"/>
<dbReference type="EMBL" id="AAMC01116774">
    <property type="status" value="NOT_ANNOTATED_CDS"/>
    <property type="molecule type" value="Genomic_DNA"/>
</dbReference>
<dbReference type="EMBL" id="BC155517">
    <property type="protein sequence ID" value="AAI55518.1"/>
    <property type="molecule type" value="mRNA"/>
</dbReference>
<dbReference type="RefSeq" id="NP_001106631.1">
    <property type="nucleotide sequence ID" value="NM_001113160.1"/>
</dbReference>
<dbReference type="SMR" id="F6UH96"/>
<dbReference type="FunCoup" id="F6UH96">
    <property type="interactions" value="3114"/>
</dbReference>
<dbReference type="STRING" id="8364.ENSXETP00000050161"/>
<dbReference type="PaxDb" id="8364-ENSXETP00000046307"/>
<dbReference type="GeneID" id="100127870"/>
<dbReference type="KEGG" id="xtr:100127870"/>
<dbReference type="AGR" id="Xenbase:XB-GENE-5845785"/>
<dbReference type="CTD" id="83932"/>
<dbReference type="Xenbase" id="XB-GENE-5845785">
    <property type="gene designation" value="sprtn"/>
</dbReference>
<dbReference type="eggNOG" id="KOG3931">
    <property type="taxonomic scope" value="Eukaryota"/>
</dbReference>
<dbReference type="HOGENOM" id="CLU_019426_2_0_1"/>
<dbReference type="InParanoid" id="F6UH96"/>
<dbReference type="OMA" id="NDNKSCT"/>
<dbReference type="OrthoDB" id="5236983at2759"/>
<dbReference type="Reactome" id="R-XTR-110320">
    <property type="pathway name" value="Translesion Synthesis by POLH"/>
</dbReference>
<dbReference type="Proteomes" id="UP000008143">
    <property type="component" value="Chromosome 5"/>
</dbReference>
<dbReference type="Bgee" id="ENSXETG00000021416">
    <property type="expression patterns" value="Expressed in egg cell and 12 other cell types or tissues"/>
</dbReference>
<dbReference type="GO" id="GO:0000785">
    <property type="term" value="C:chromatin"/>
    <property type="evidence" value="ECO:0000250"/>
    <property type="project" value="UniProtKB"/>
</dbReference>
<dbReference type="GO" id="GO:0005634">
    <property type="term" value="C:nucleus"/>
    <property type="evidence" value="ECO:0000250"/>
    <property type="project" value="UniProtKB"/>
</dbReference>
<dbReference type="GO" id="GO:0003690">
    <property type="term" value="F:double-stranded DNA binding"/>
    <property type="evidence" value="ECO:0000250"/>
    <property type="project" value="UniProtKB"/>
</dbReference>
<dbReference type="GO" id="GO:0070530">
    <property type="term" value="F:K63-linked polyubiquitin modification-dependent protein binding"/>
    <property type="evidence" value="ECO:0000250"/>
    <property type="project" value="UniProtKB"/>
</dbReference>
<dbReference type="GO" id="GO:0004222">
    <property type="term" value="F:metalloendopeptidase activity"/>
    <property type="evidence" value="ECO:0000250"/>
    <property type="project" value="UniProtKB"/>
</dbReference>
<dbReference type="GO" id="GO:0003697">
    <property type="term" value="F:single-stranded DNA binding"/>
    <property type="evidence" value="ECO:0000250"/>
    <property type="project" value="UniProtKB"/>
</dbReference>
<dbReference type="GO" id="GO:0043130">
    <property type="term" value="F:ubiquitin binding"/>
    <property type="evidence" value="ECO:0000250"/>
    <property type="project" value="UniProtKB"/>
</dbReference>
<dbReference type="GO" id="GO:0008270">
    <property type="term" value="F:zinc ion binding"/>
    <property type="evidence" value="ECO:0007669"/>
    <property type="project" value="UniProtKB-KW"/>
</dbReference>
<dbReference type="GO" id="GO:0006974">
    <property type="term" value="P:DNA damage response"/>
    <property type="evidence" value="ECO:0000250"/>
    <property type="project" value="UniProtKB"/>
</dbReference>
<dbReference type="GO" id="GO:0031398">
    <property type="term" value="P:positive regulation of protein ubiquitination"/>
    <property type="evidence" value="ECO:0000250"/>
    <property type="project" value="UniProtKB"/>
</dbReference>
<dbReference type="GO" id="GO:0016540">
    <property type="term" value="P:protein autoprocessing"/>
    <property type="evidence" value="ECO:0000250"/>
    <property type="project" value="UniProtKB"/>
</dbReference>
<dbReference type="GO" id="GO:0106300">
    <property type="term" value="P:protein-DNA covalent cross-linking repair"/>
    <property type="evidence" value="ECO:0000250"/>
    <property type="project" value="UniProtKB"/>
</dbReference>
<dbReference type="GO" id="GO:0006508">
    <property type="term" value="P:proteolysis"/>
    <property type="evidence" value="ECO:0000250"/>
    <property type="project" value="UniProtKB"/>
</dbReference>
<dbReference type="GO" id="GO:0009411">
    <property type="term" value="P:response to UV"/>
    <property type="evidence" value="ECO:0000250"/>
    <property type="project" value="UniProtKB"/>
</dbReference>
<dbReference type="GO" id="GO:0019985">
    <property type="term" value="P:translesion synthesis"/>
    <property type="evidence" value="ECO:0000250"/>
    <property type="project" value="UniProtKB"/>
</dbReference>
<dbReference type="FunFam" id="3.30.160.60:FF:000331">
    <property type="entry name" value="E3 ubiquitin-protein ligase RAD18"/>
    <property type="match status" value="1"/>
</dbReference>
<dbReference type="Gene3D" id="3.30.160.60">
    <property type="entry name" value="Classic Zinc Finger"/>
    <property type="match status" value="1"/>
</dbReference>
<dbReference type="InterPro" id="IPR006642">
    <property type="entry name" value="Rad18_UBZ4"/>
</dbReference>
<dbReference type="InterPro" id="IPR044245">
    <property type="entry name" value="Spartan"/>
</dbReference>
<dbReference type="InterPro" id="IPR006640">
    <property type="entry name" value="SprT-like_domain"/>
</dbReference>
<dbReference type="InterPro" id="IPR055220">
    <property type="entry name" value="SPRTN_ZBD"/>
</dbReference>
<dbReference type="PANTHER" id="PTHR21220">
    <property type="entry name" value="DNA-DEPENDENT METALLOPROTEASE SPRTN"/>
    <property type="match status" value="1"/>
</dbReference>
<dbReference type="PANTHER" id="PTHR21220:SF5">
    <property type="entry name" value="DNA-DEPENDENT METALLOPROTEASE SPRTN"/>
    <property type="match status" value="1"/>
</dbReference>
<dbReference type="Pfam" id="PF10263">
    <property type="entry name" value="SprT-like"/>
    <property type="match status" value="1"/>
</dbReference>
<dbReference type="Pfam" id="PF22934">
    <property type="entry name" value="SPRTN_ZBD"/>
    <property type="match status" value="1"/>
</dbReference>
<dbReference type="SMART" id="SM00731">
    <property type="entry name" value="SprT"/>
    <property type="match status" value="1"/>
</dbReference>
<dbReference type="SMART" id="SM00734">
    <property type="entry name" value="ZnF_Rad18"/>
    <property type="match status" value="1"/>
</dbReference>
<dbReference type="PROSITE" id="PS51908">
    <property type="entry name" value="ZF_UBZ4"/>
    <property type="match status" value="1"/>
</dbReference>
<dbReference type="PROSITE" id="PS00142">
    <property type="entry name" value="ZINC_PROTEASE"/>
    <property type="match status" value="1"/>
</dbReference>
<protein>
    <recommendedName>
        <fullName evidence="7">DNA-dependent metalloprotease SPRTN</fullName>
        <ecNumber evidence="2">3.4.24.-</ecNumber>
    </recommendedName>
    <alternativeName>
        <fullName evidence="2">Protein with SprT-like domain at the N terminus</fullName>
        <shortName evidence="2">Spartan</shortName>
    </alternativeName>
</protein>
<proteinExistence type="evidence at transcript level"/>
<name>SPRTN_XENTR</name>
<evidence type="ECO:0000250" key="1">
    <source>
        <dbReference type="UniProtKB" id="A0A1L8G2K9"/>
    </source>
</evidence>
<evidence type="ECO:0000250" key="2">
    <source>
        <dbReference type="UniProtKB" id="Q9H040"/>
    </source>
</evidence>
<evidence type="ECO:0000255" key="3"/>
<evidence type="ECO:0000255" key="4">
    <source>
        <dbReference type="PROSITE-ProRule" id="PRU01256"/>
    </source>
</evidence>
<evidence type="ECO:0000255" key="5">
    <source>
        <dbReference type="PROSITE-ProRule" id="PRU10095"/>
    </source>
</evidence>
<evidence type="ECO:0000256" key="6">
    <source>
        <dbReference type="SAM" id="MobiDB-lite"/>
    </source>
</evidence>
<evidence type="ECO:0000305" key="7"/>
<comment type="function">
    <text evidence="1 2">DNA-dependent metalloendopeptidase that mediates the proteolytic cleavage of covalent DNA-protein cross-links (DPCs) during DNA synthesis, thereby playing a key role in maintaining genomic integrity. DPCs are highly toxic DNA lesions that interfere with essential chromatin transactions, such as replication and transcription, and which are induced by reactive agents, such as UV light or formaldehyde. Associates with the DNA replication machinery and specifically removes DPCs during DNA synthesis. Catalyzes proteolytic cleavage of the hmces DNA-protein cross-link following unfolding by the brip1/fancj helicase. Acts as a pleiotropic protease for DNA-binding proteins cross-linked with DNA, such as top1, top2a, histones H3 and H4. Mediates degradation of DPCs that are not ubiquitinated, while it is not able to degrade ubiquitinated DPCs. SPRTN activation requires polymerase collision with DPCs followed by helicase bypass of DPCs. May also act as a 'reader' of ubiquitinated pcna: facilitates chromatin association of rad18 and is required for efficient pcna monoubiquitination, promoting a feed-forward loop to enhance pcna ubiquitination and translesion DNA synthesis. Acts as a regulator of translesion DNA synthesis by recruiting vcp/p97 to sites of DNA damage.</text>
</comment>
<comment type="cofactor">
    <cofactor evidence="2">
        <name>Zn(2+)</name>
        <dbReference type="ChEBI" id="CHEBI:29105"/>
    </cofactor>
</comment>
<comment type="activity regulation">
    <text evidence="2">DNA-binding activates the protease activity: single-stranded DNA-binding specifically activates ability to cleave covalent DNA-protein cross-links (DPCs). In contrast, double-stranded DNA-binding specifically activates autocatalytic cleavage, and subsequent inactivation.</text>
</comment>
<comment type="subunit">
    <text evidence="2">Homodimer.</text>
</comment>
<comment type="subcellular location">
    <subcellularLocation>
        <location evidence="2">Nucleus</location>
    </subcellularLocation>
    <subcellularLocation>
        <location evidence="1">Chromosome</location>
    </subcellularLocation>
    <text evidence="2">Localizes to sites of UV damage via the PIP-box. Recruited to stalled replication forks at sites of replication stress.</text>
</comment>
<comment type="domain">
    <text evidence="2">The UBZ4-type zinc fingers mediate binding to 'Lys-48'- and 'Lys-63'-linked polyubiquitin.</text>
</comment>
<comment type="PTM">
    <text evidence="2">Autocatalytically cleaved in response to double-stranded DNA-binding: autocatalytic cleavage takes place in trans and leads to inactivation.</text>
</comment>
<comment type="similarity">
    <text evidence="7">Belongs to the Spartan family.</text>
</comment>
<feature type="chain" id="PRO_0000419486" description="DNA-dependent metalloprotease SPRTN">
    <location>
        <begin position="1"/>
        <end position="436"/>
    </location>
</feature>
<feature type="domain" description="SprT-like" evidence="3">
    <location>
        <begin position="19"/>
        <end position="186"/>
    </location>
</feature>
<feature type="zinc finger region" description="UBZ4-type" evidence="4">
    <location>
        <begin position="408"/>
        <end position="435"/>
    </location>
</feature>
<feature type="region of interest" description="Disordered" evidence="6">
    <location>
        <begin position="184"/>
        <end position="219"/>
    </location>
</feature>
<feature type="region of interest" description="Disordered" evidence="6">
    <location>
        <begin position="300"/>
        <end position="321"/>
    </location>
</feature>
<feature type="short sequence motif" description="SHP-box" evidence="2">
    <location>
        <begin position="231"/>
        <end position="239"/>
    </location>
</feature>
<feature type="short sequence motif" description="PIP-box" evidence="2">
    <location>
        <begin position="271"/>
        <end position="277"/>
    </location>
</feature>
<feature type="active site" evidence="1 5">
    <location>
        <position position="86"/>
    </location>
</feature>
<feature type="binding site" evidence="2 5">
    <location>
        <position position="85"/>
    </location>
    <ligand>
        <name>Zn(2+)</name>
        <dbReference type="ChEBI" id="CHEBI:29105"/>
        <label>1</label>
        <note>catalytic</note>
    </ligand>
</feature>
<feature type="binding site" evidence="2 5">
    <location>
        <position position="89"/>
    </location>
    <ligand>
        <name>Zn(2+)</name>
        <dbReference type="ChEBI" id="CHEBI:29105"/>
        <label>1</label>
        <note>catalytic</note>
    </ligand>
</feature>
<feature type="binding site" evidence="2">
    <location>
        <position position="104"/>
    </location>
    <ligand>
        <name>Zn(2+)</name>
        <dbReference type="ChEBI" id="CHEBI:29105"/>
        <label>1</label>
        <note>catalytic</note>
    </ligand>
</feature>
<feature type="binding site" evidence="4">
    <location>
        <position position="411"/>
    </location>
    <ligand>
        <name>Zn(2+)</name>
        <dbReference type="ChEBI" id="CHEBI:29105"/>
        <label>2</label>
    </ligand>
</feature>
<feature type="binding site" evidence="4">
    <location>
        <position position="414"/>
    </location>
    <ligand>
        <name>Zn(2+)</name>
        <dbReference type="ChEBI" id="CHEBI:29105"/>
        <label>2</label>
    </ligand>
</feature>
<feature type="binding site" evidence="4">
    <location>
        <position position="426"/>
    </location>
    <ligand>
        <name>Zn(2+)</name>
        <dbReference type="ChEBI" id="CHEBI:29105"/>
        <label>2</label>
    </ligand>
</feature>
<feature type="binding site" evidence="4">
    <location>
        <position position="430"/>
    </location>
    <ligand>
        <name>Zn(2+)</name>
        <dbReference type="ChEBI" id="CHEBI:29105"/>
        <label>2</label>
    </ligand>
</feature>
<organism>
    <name type="scientific">Xenopus tropicalis</name>
    <name type="common">Western clawed frog</name>
    <name type="synonym">Silurana tropicalis</name>
    <dbReference type="NCBI Taxonomy" id="8364"/>
    <lineage>
        <taxon>Eukaryota</taxon>
        <taxon>Metazoa</taxon>
        <taxon>Chordata</taxon>
        <taxon>Craniata</taxon>
        <taxon>Vertebrata</taxon>
        <taxon>Euteleostomi</taxon>
        <taxon>Amphibia</taxon>
        <taxon>Batrachia</taxon>
        <taxon>Anura</taxon>
        <taxon>Pipoidea</taxon>
        <taxon>Pipidae</taxon>
        <taxon>Xenopodinae</taxon>
        <taxon>Xenopus</taxon>
        <taxon>Silurana</taxon>
    </lineage>
</organism>
<gene>
    <name evidence="2" type="primary">sprtn</name>
</gene>
<sequence>MQLSVVDPTWELLDPNPDIRALFLEFNDTFFWGQLSGIEVKWSARMTLCAGVCSYEGRGGLCSIRLSEPLLKLRPRKDLVQTLLHEMIHALLFVTHNNKDHDSHGPEFCKHMERINKRTGANISVYHNFHDEVDEYRKHWWLCNGPCQKRKPYFGYVKRAMNRAPSSLDPWWADHQRTCGGEFVKIKEPENYSQKRKRNNDPTKSELGNSSHVKINKGKSNGVDIRTVIPFSGTGYKLFEPSKSDAQLKIQNDNPTKDKAVMHHTPPSTNQTDSTFLSRKIVSAKKISVANTKVFINLNGSPIKLPSSSNNKSHQDSSKQKSVLHFFKTQKDNSIDLTSSSQSFPSTSQGPNREETEHFYKKLQMDDKESKDTFIIHSLNKTNVSDSLNNKSCAGPAATINSGLNHTKVCCPVCGTEIFESKINDHLDTCLQNYNT</sequence>
<keyword id="KW-0068">Autocatalytic cleavage</keyword>
<keyword id="KW-0158">Chromosome</keyword>
<keyword id="KW-0227">DNA damage</keyword>
<keyword id="KW-0234">DNA repair</keyword>
<keyword id="KW-0378">Hydrolase</keyword>
<keyword id="KW-1017">Isopeptide bond</keyword>
<keyword id="KW-0479">Metal-binding</keyword>
<keyword id="KW-0482">Metalloprotease</keyword>
<keyword id="KW-0539">Nucleus</keyword>
<keyword id="KW-0645">Protease</keyword>
<keyword id="KW-1185">Reference proteome</keyword>
<keyword id="KW-0862">Zinc</keyword>
<keyword id="KW-0863">Zinc-finger</keyword>